<name>Y6897_DICDI</name>
<gene>
    <name type="ORF">DDB_G0286897</name>
</gene>
<keyword id="KW-0325">Glycoprotein</keyword>
<keyword id="KW-0472">Membrane</keyword>
<keyword id="KW-1185">Reference proteome</keyword>
<keyword id="KW-0732">Signal</keyword>
<keyword id="KW-0812">Transmembrane</keyword>
<keyword id="KW-1133">Transmembrane helix</keyword>
<organism>
    <name type="scientific">Dictyostelium discoideum</name>
    <name type="common">Social amoeba</name>
    <dbReference type="NCBI Taxonomy" id="44689"/>
    <lineage>
        <taxon>Eukaryota</taxon>
        <taxon>Amoebozoa</taxon>
        <taxon>Evosea</taxon>
        <taxon>Eumycetozoa</taxon>
        <taxon>Dictyostelia</taxon>
        <taxon>Dictyosteliales</taxon>
        <taxon>Dictyosteliaceae</taxon>
        <taxon>Dictyostelium</taxon>
    </lineage>
</organism>
<sequence>MNYFKYFIFVVFLFFTIVKCEQLLGEIEISNKNFAIDASVVDTKINYILDDTIKTPKLIITSIKGDATNINDIITVSEDKSTVTFGDFTELSSSNKLVGFNWISMLIASLLSIGLFATTTTTNKKSSIIILIIGFICLSLMINGIQSISLSDVSVKIEIRVPSNYQFESFKLKLNSGSSNIVGLIANSIEIDSCSMVKDHSITIGQLVVFSSLKVCSSLDIKITNLGLSPSNTIAELKTTRNIDLQFSNGFSGSISIDSPSVTLDPGCTTTISGQTTTGTCNGGSSSKLSISAGNSAIVRNLEITCPIDNSWRVTPASSGPSTNSPSIFTTQPATNFNYGKSNLVFMAQWNNVSLLDGPVENSFNITYVTWSPNSHWLVSKDPSPTLKSGVNYEFSLELLLGQPLGEYTSISNVSIYFFNPKDITNPNGNSRYFQYSNKPPLYMKTFSGANFISNSNFIKTSITFSPTKDIGSAVFALQINRTAALTGPSEISISIKDMKITIPSKSITTPSNILSKDSELLTLPRPSTLLDPQDSSSCTYKQTDLVHWHNPSTWASGFVPLPSSNIILPEGKRVLISPCSISQTEVYKKITIPPTSELVFSDSPMTINVQDIYVQGKLTMGTNTCRYNANINVIFHGNKTTTDTIAQYFGSKGIAVASGGFISVQGKQYHNTWTKLSTTAWTGDYVIYVQDSINWEVGQQVLITTSVYRDESDNQNEVMTIAAIQGKVIQFTKPLRYYHYGGQEYQAEVALLSRRIVFRGDGNGQEQTDSQSFGGHVLVNGEGQFSGIQLIRMGQTNIKARYPLHYHLAGTVKNSYISDCSVTNSYYRCYTIHGTNNVSLVRNVAFDIRGHCYYLEDGVEVDNNIWFNFASYVHPIGKPAGGPSQTGEIFQQSDSLTQPADSAAGCYYITNAYNSLVGNAASGGWSGFAFPNLDKPIGNHRTISIIPSQFPLKEFTGNTAHSSGYYFEEGGSIYVGGNLTFNEATQLLTYNSGRFSRSTYFNGTKKDGNERWMRFNNTKIYLSNRGIQHWGERVEVVGLESHDSIRPSTLFGQAWLSNAIVNGQSGNIVSNQGRNRQGFQFYDTYVQTILSNINFRNFIKDPDSENPESDNRVIISMTHSDVFKPQGISATKQITLTNVASSQVIGHRVVETGSSRYFNFIDWDTSLVPGRTAVGAPTLVGSHQNWWQYDATCSYNNDWLCWVCDKGDKEIASISVLVPGLIESGYTNQEEDSYVGTASLFGNGITNRRSTNITRNAGITGVSNMGWYLWFSTGTPTSINIWVAQVIKNNYLFVAIPYPANTEFSIRCAYRWNNKFNYNFVLANSASEVRNGNGTRYYFDQTHLFIKAVNLALTGNEYFERGGAKVYNVFWEFNIYIEASNKNVQPVNGFYTGIPDTLPSGNL</sequence>
<protein>
    <recommendedName>
        <fullName>G8 domain-containing protein DDB_G0286897</fullName>
    </recommendedName>
</protein>
<comment type="subcellular location">
    <subcellularLocation>
        <location evidence="3">Membrane</location>
        <topology evidence="3">Multi-pass membrane protein</topology>
    </subcellularLocation>
</comment>
<comment type="similarity">
    <text evidence="3">Belongs to the comF family.</text>
</comment>
<feature type="signal peptide" evidence="1">
    <location>
        <begin position="1"/>
        <end position="20"/>
    </location>
</feature>
<feature type="chain" id="PRO_0000393593" description="G8 domain-containing protein DDB_G0286897">
    <location>
        <begin position="21"/>
        <end position="1404"/>
    </location>
</feature>
<feature type="transmembrane region" description="Helical" evidence="1">
    <location>
        <begin position="97"/>
        <end position="117"/>
    </location>
</feature>
<feature type="transmembrane region" description="Helical" evidence="1">
    <location>
        <begin position="128"/>
        <end position="148"/>
    </location>
</feature>
<feature type="domain" description="G8" evidence="2">
    <location>
        <begin position="553"/>
        <end position="679"/>
    </location>
</feature>
<feature type="glycosylation site" description="N-linked (GlcNAc...) asparagine" evidence="1">
    <location>
        <position position="352"/>
    </location>
</feature>
<feature type="glycosylation site" description="N-linked (GlcNAc...) asparagine" evidence="1">
    <location>
        <position position="365"/>
    </location>
</feature>
<feature type="glycosylation site" description="N-linked (GlcNAc...) asparagine" evidence="1">
    <location>
        <position position="413"/>
    </location>
</feature>
<feature type="glycosylation site" description="N-linked (GlcNAc...) asparagine" evidence="1">
    <location>
        <position position="481"/>
    </location>
</feature>
<feature type="glycosylation site" description="N-linked (GlcNAc...) asparagine" evidence="1">
    <location>
        <position position="639"/>
    </location>
</feature>
<feature type="glycosylation site" description="N-linked (GlcNAc...) asparagine" evidence="1">
    <location>
        <position position="838"/>
    </location>
</feature>
<feature type="glycosylation site" description="N-linked (GlcNAc...) asparagine" evidence="1">
    <location>
        <position position="979"/>
    </location>
</feature>
<feature type="glycosylation site" description="N-linked (GlcNAc...) asparagine" evidence="1">
    <location>
        <position position="1003"/>
    </location>
</feature>
<feature type="glycosylation site" description="N-linked (GlcNAc...) asparagine" evidence="1">
    <location>
        <position position="1017"/>
    </location>
</feature>
<feature type="glycosylation site" description="N-linked (GlcNAc...) asparagine" evidence="1">
    <location>
        <position position="1253"/>
    </location>
</feature>
<feature type="glycosylation site" description="N-linked (GlcNAc...) asparagine" evidence="1">
    <location>
        <position position="1334"/>
    </location>
</feature>
<reference key="1">
    <citation type="journal article" date="2005" name="Nature">
        <title>The genome of the social amoeba Dictyostelium discoideum.</title>
        <authorList>
            <person name="Eichinger L."/>
            <person name="Pachebat J.A."/>
            <person name="Gloeckner G."/>
            <person name="Rajandream M.A."/>
            <person name="Sucgang R."/>
            <person name="Berriman M."/>
            <person name="Song J."/>
            <person name="Olsen R."/>
            <person name="Szafranski K."/>
            <person name="Xu Q."/>
            <person name="Tunggal B."/>
            <person name="Kummerfeld S."/>
            <person name="Madera M."/>
            <person name="Konfortov B.A."/>
            <person name="Rivero F."/>
            <person name="Bankier A.T."/>
            <person name="Lehmann R."/>
            <person name="Hamlin N."/>
            <person name="Davies R."/>
            <person name="Gaudet P."/>
            <person name="Fey P."/>
            <person name="Pilcher K."/>
            <person name="Chen G."/>
            <person name="Saunders D."/>
            <person name="Sodergren E.J."/>
            <person name="Davis P."/>
            <person name="Kerhornou A."/>
            <person name="Nie X."/>
            <person name="Hall N."/>
            <person name="Anjard C."/>
            <person name="Hemphill L."/>
            <person name="Bason N."/>
            <person name="Farbrother P."/>
            <person name="Desany B."/>
            <person name="Just E."/>
            <person name="Morio T."/>
            <person name="Rost R."/>
            <person name="Churcher C.M."/>
            <person name="Cooper J."/>
            <person name="Haydock S."/>
            <person name="van Driessche N."/>
            <person name="Cronin A."/>
            <person name="Goodhead I."/>
            <person name="Muzny D.M."/>
            <person name="Mourier T."/>
            <person name="Pain A."/>
            <person name="Lu M."/>
            <person name="Harper D."/>
            <person name="Lindsay R."/>
            <person name="Hauser H."/>
            <person name="James K.D."/>
            <person name="Quiles M."/>
            <person name="Madan Babu M."/>
            <person name="Saito T."/>
            <person name="Buchrieser C."/>
            <person name="Wardroper A."/>
            <person name="Felder M."/>
            <person name="Thangavelu M."/>
            <person name="Johnson D."/>
            <person name="Knights A."/>
            <person name="Loulseged H."/>
            <person name="Mungall K.L."/>
            <person name="Oliver K."/>
            <person name="Price C."/>
            <person name="Quail M.A."/>
            <person name="Urushihara H."/>
            <person name="Hernandez J."/>
            <person name="Rabbinowitsch E."/>
            <person name="Steffen D."/>
            <person name="Sanders M."/>
            <person name="Ma J."/>
            <person name="Kohara Y."/>
            <person name="Sharp S."/>
            <person name="Simmonds M.N."/>
            <person name="Spiegler S."/>
            <person name="Tivey A."/>
            <person name="Sugano S."/>
            <person name="White B."/>
            <person name="Walker D."/>
            <person name="Woodward J.R."/>
            <person name="Winckler T."/>
            <person name="Tanaka Y."/>
            <person name="Shaulsky G."/>
            <person name="Schleicher M."/>
            <person name="Weinstock G.M."/>
            <person name="Rosenthal A."/>
            <person name="Cox E.C."/>
            <person name="Chisholm R.L."/>
            <person name="Gibbs R.A."/>
            <person name="Loomis W.F."/>
            <person name="Platzer M."/>
            <person name="Kay R.R."/>
            <person name="Williams J.G."/>
            <person name="Dear P.H."/>
            <person name="Noegel A.A."/>
            <person name="Barrell B.G."/>
            <person name="Kuspa A."/>
        </authorList>
    </citation>
    <scope>NUCLEOTIDE SEQUENCE [LARGE SCALE GENOMIC DNA]</scope>
    <source>
        <strain>AX4</strain>
    </source>
</reference>
<dbReference type="EMBL" id="AAFI02000091">
    <property type="protein sequence ID" value="EAL64006.1"/>
    <property type="molecule type" value="Genomic_DNA"/>
</dbReference>
<dbReference type="RefSeq" id="XP_637511.1">
    <property type="nucleotide sequence ID" value="XM_632419.1"/>
</dbReference>
<dbReference type="SMR" id="Q54L52"/>
<dbReference type="GlyGen" id="Q54L52">
    <property type="glycosylation" value="12 sites"/>
</dbReference>
<dbReference type="PaxDb" id="44689-DDB0304437"/>
<dbReference type="EnsemblProtists" id="EAL64006">
    <property type="protein sequence ID" value="EAL64006"/>
    <property type="gene ID" value="DDB_G0286897"/>
</dbReference>
<dbReference type="GeneID" id="8625850"/>
<dbReference type="KEGG" id="ddi:DDB_G0286897"/>
<dbReference type="dictyBase" id="DDB_G0286897"/>
<dbReference type="VEuPathDB" id="AmoebaDB:DDB_G0286897"/>
<dbReference type="HOGENOM" id="CLU_005143_0_0_1"/>
<dbReference type="InParanoid" id="Q54L52"/>
<dbReference type="OMA" id="ANDIVHW"/>
<dbReference type="PhylomeDB" id="Q54L52"/>
<dbReference type="PRO" id="PR:Q54L52"/>
<dbReference type="Proteomes" id="UP000002195">
    <property type="component" value="Chromosome 4"/>
</dbReference>
<dbReference type="GO" id="GO:0016020">
    <property type="term" value="C:membrane"/>
    <property type="evidence" value="ECO:0007669"/>
    <property type="project" value="UniProtKB-SubCell"/>
</dbReference>
<dbReference type="InterPro" id="IPR055401">
    <property type="entry name" value="CEMIP_beta-hel_dom"/>
</dbReference>
<dbReference type="InterPro" id="IPR019316">
    <property type="entry name" value="G8_domain"/>
</dbReference>
<dbReference type="InterPro" id="IPR052334">
    <property type="entry name" value="G8_domain-comF-like"/>
</dbReference>
<dbReference type="PANTHER" id="PTHR47687:SF6">
    <property type="entry name" value="COMMUNICATION MUTANT PROTEIN F-RELATED"/>
    <property type="match status" value="1"/>
</dbReference>
<dbReference type="PANTHER" id="PTHR47687">
    <property type="entry name" value="G8 DOMAIN-CONTAINING PROTEIN DDB_G0288475-RELATED"/>
    <property type="match status" value="1"/>
</dbReference>
<dbReference type="Pfam" id="PF24606">
    <property type="entry name" value="CEMIP_beta-hel"/>
    <property type="match status" value="1"/>
</dbReference>
<dbReference type="Pfam" id="PF10162">
    <property type="entry name" value="G8"/>
    <property type="match status" value="1"/>
</dbReference>
<dbReference type="SMART" id="SM01225">
    <property type="entry name" value="G8"/>
    <property type="match status" value="1"/>
</dbReference>
<dbReference type="PROSITE" id="PS51484">
    <property type="entry name" value="G8"/>
    <property type="match status" value="1"/>
</dbReference>
<proteinExistence type="inferred from homology"/>
<accession>Q54L52</accession>
<evidence type="ECO:0000255" key="1"/>
<evidence type="ECO:0000255" key="2">
    <source>
        <dbReference type="PROSITE-ProRule" id="PRU00817"/>
    </source>
</evidence>
<evidence type="ECO:0000305" key="3"/>